<feature type="chain" id="PRO_1000100597" description="Adenylate kinase">
    <location>
        <begin position="1"/>
        <end position="222"/>
    </location>
</feature>
<feature type="region of interest" description="NMP" evidence="1">
    <location>
        <begin position="30"/>
        <end position="59"/>
    </location>
</feature>
<feature type="region of interest" description="LID" evidence="1">
    <location>
        <begin position="122"/>
        <end position="159"/>
    </location>
</feature>
<feature type="region of interest" description="Disordered" evidence="2">
    <location>
        <begin position="138"/>
        <end position="160"/>
    </location>
</feature>
<feature type="binding site" evidence="1">
    <location>
        <begin position="10"/>
        <end position="15"/>
    </location>
    <ligand>
        <name>ATP</name>
        <dbReference type="ChEBI" id="CHEBI:30616"/>
    </ligand>
</feature>
<feature type="binding site" evidence="1">
    <location>
        <position position="31"/>
    </location>
    <ligand>
        <name>AMP</name>
        <dbReference type="ChEBI" id="CHEBI:456215"/>
    </ligand>
</feature>
<feature type="binding site" evidence="1">
    <location>
        <position position="36"/>
    </location>
    <ligand>
        <name>AMP</name>
        <dbReference type="ChEBI" id="CHEBI:456215"/>
    </ligand>
</feature>
<feature type="binding site" evidence="1">
    <location>
        <begin position="57"/>
        <end position="59"/>
    </location>
    <ligand>
        <name>AMP</name>
        <dbReference type="ChEBI" id="CHEBI:456215"/>
    </ligand>
</feature>
<feature type="binding site" evidence="1">
    <location>
        <begin position="85"/>
        <end position="88"/>
    </location>
    <ligand>
        <name>AMP</name>
        <dbReference type="ChEBI" id="CHEBI:456215"/>
    </ligand>
</feature>
<feature type="binding site" evidence="1">
    <location>
        <position position="92"/>
    </location>
    <ligand>
        <name>AMP</name>
        <dbReference type="ChEBI" id="CHEBI:456215"/>
    </ligand>
</feature>
<feature type="binding site" evidence="1">
    <location>
        <position position="123"/>
    </location>
    <ligand>
        <name>ATP</name>
        <dbReference type="ChEBI" id="CHEBI:30616"/>
    </ligand>
</feature>
<feature type="binding site" evidence="1">
    <location>
        <begin position="132"/>
        <end position="133"/>
    </location>
    <ligand>
        <name>ATP</name>
        <dbReference type="ChEBI" id="CHEBI:30616"/>
    </ligand>
</feature>
<feature type="binding site" evidence="1">
    <location>
        <position position="156"/>
    </location>
    <ligand>
        <name>AMP</name>
        <dbReference type="ChEBI" id="CHEBI:456215"/>
    </ligand>
</feature>
<feature type="binding site" evidence="1">
    <location>
        <position position="167"/>
    </location>
    <ligand>
        <name>AMP</name>
        <dbReference type="ChEBI" id="CHEBI:456215"/>
    </ligand>
</feature>
<feature type="binding site" evidence="1">
    <location>
        <position position="207"/>
    </location>
    <ligand>
        <name>ATP</name>
        <dbReference type="ChEBI" id="CHEBI:30616"/>
    </ligand>
</feature>
<gene>
    <name evidence="1" type="primary">adk</name>
    <name type="ordered locus">Rpic_2810</name>
</gene>
<organism>
    <name type="scientific">Ralstonia pickettii (strain 12J)</name>
    <dbReference type="NCBI Taxonomy" id="402626"/>
    <lineage>
        <taxon>Bacteria</taxon>
        <taxon>Pseudomonadati</taxon>
        <taxon>Pseudomonadota</taxon>
        <taxon>Betaproteobacteria</taxon>
        <taxon>Burkholderiales</taxon>
        <taxon>Burkholderiaceae</taxon>
        <taxon>Ralstonia</taxon>
    </lineage>
</organism>
<protein>
    <recommendedName>
        <fullName evidence="1">Adenylate kinase</fullName>
        <shortName evidence="1">AK</shortName>
        <ecNumber evidence="1">2.7.4.3</ecNumber>
    </recommendedName>
    <alternativeName>
        <fullName evidence="1">ATP-AMP transphosphorylase</fullName>
    </alternativeName>
    <alternativeName>
        <fullName evidence="1">ATP:AMP phosphotransferase</fullName>
    </alternativeName>
    <alternativeName>
        <fullName evidence="1">Adenylate monophosphate kinase</fullName>
    </alternativeName>
</protein>
<accession>B2UB85</accession>
<keyword id="KW-0067">ATP-binding</keyword>
<keyword id="KW-0963">Cytoplasm</keyword>
<keyword id="KW-0418">Kinase</keyword>
<keyword id="KW-0545">Nucleotide biosynthesis</keyword>
<keyword id="KW-0547">Nucleotide-binding</keyword>
<keyword id="KW-0808">Transferase</keyword>
<proteinExistence type="inferred from homology"/>
<comment type="function">
    <text evidence="1">Catalyzes the reversible transfer of the terminal phosphate group between ATP and AMP. Plays an important role in cellular energy homeostasis and in adenine nucleotide metabolism.</text>
</comment>
<comment type="catalytic activity">
    <reaction evidence="1">
        <text>AMP + ATP = 2 ADP</text>
        <dbReference type="Rhea" id="RHEA:12973"/>
        <dbReference type="ChEBI" id="CHEBI:30616"/>
        <dbReference type="ChEBI" id="CHEBI:456215"/>
        <dbReference type="ChEBI" id="CHEBI:456216"/>
        <dbReference type="EC" id="2.7.4.3"/>
    </reaction>
</comment>
<comment type="pathway">
    <text evidence="1">Purine metabolism; AMP biosynthesis via salvage pathway; AMP from ADP: step 1/1.</text>
</comment>
<comment type="subunit">
    <text evidence="1">Monomer.</text>
</comment>
<comment type="subcellular location">
    <subcellularLocation>
        <location evidence="1">Cytoplasm</location>
    </subcellularLocation>
</comment>
<comment type="domain">
    <text evidence="1">Consists of three domains, a large central CORE domain and two small peripheral domains, NMPbind and LID, which undergo movements during catalysis. The LID domain closes over the site of phosphoryl transfer upon ATP binding. Assembling and dissambling the active center during each catalytic cycle provides an effective means to prevent ATP hydrolysis.</text>
</comment>
<comment type="similarity">
    <text evidence="1">Belongs to the adenylate kinase family.</text>
</comment>
<dbReference type="EC" id="2.7.4.3" evidence="1"/>
<dbReference type="EMBL" id="CP001068">
    <property type="protein sequence ID" value="ACD27934.1"/>
    <property type="molecule type" value="Genomic_DNA"/>
</dbReference>
<dbReference type="SMR" id="B2UB85"/>
<dbReference type="STRING" id="402626.Rpic_2810"/>
<dbReference type="KEGG" id="rpi:Rpic_2810"/>
<dbReference type="eggNOG" id="COG0563">
    <property type="taxonomic scope" value="Bacteria"/>
</dbReference>
<dbReference type="HOGENOM" id="CLU_032354_1_2_4"/>
<dbReference type="UniPathway" id="UPA00588">
    <property type="reaction ID" value="UER00649"/>
</dbReference>
<dbReference type="GO" id="GO:0005737">
    <property type="term" value="C:cytoplasm"/>
    <property type="evidence" value="ECO:0007669"/>
    <property type="project" value="UniProtKB-SubCell"/>
</dbReference>
<dbReference type="GO" id="GO:0004017">
    <property type="term" value="F:adenylate kinase activity"/>
    <property type="evidence" value="ECO:0007669"/>
    <property type="project" value="UniProtKB-UniRule"/>
</dbReference>
<dbReference type="GO" id="GO:0005524">
    <property type="term" value="F:ATP binding"/>
    <property type="evidence" value="ECO:0007669"/>
    <property type="project" value="UniProtKB-UniRule"/>
</dbReference>
<dbReference type="GO" id="GO:0044209">
    <property type="term" value="P:AMP salvage"/>
    <property type="evidence" value="ECO:0007669"/>
    <property type="project" value="UniProtKB-UniRule"/>
</dbReference>
<dbReference type="CDD" id="cd01428">
    <property type="entry name" value="ADK"/>
    <property type="match status" value="1"/>
</dbReference>
<dbReference type="FunFam" id="3.40.50.300:FF:000106">
    <property type="entry name" value="Adenylate kinase mitochondrial"/>
    <property type="match status" value="1"/>
</dbReference>
<dbReference type="Gene3D" id="3.40.50.300">
    <property type="entry name" value="P-loop containing nucleotide triphosphate hydrolases"/>
    <property type="match status" value="1"/>
</dbReference>
<dbReference type="HAMAP" id="MF_00235">
    <property type="entry name" value="Adenylate_kinase_Adk"/>
    <property type="match status" value="1"/>
</dbReference>
<dbReference type="InterPro" id="IPR006259">
    <property type="entry name" value="Adenyl_kin_sub"/>
</dbReference>
<dbReference type="InterPro" id="IPR000850">
    <property type="entry name" value="Adenylat/UMP-CMP_kin"/>
</dbReference>
<dbReference type="InterPro" id="IPR033690">
    <property type="entry name" value="Adenylat_kinase_CS"/>
</dbReference>
<dbReference type="InterPro" id="IPR007862">
    <property type="entry name" value="Adenylate_kinase_lid-dom"/>
</dbReference>
<dbReference type="InterPro" id="IPR027417">
    <property type="entry name" value="P-loop_NTPase"/>
</dbReference>
<dbReference type="NCBIfam" id="TIGR01351">
    <property type="entry name" value="adk"/>
    <property type="match status" value="1"/>
</dbReference>
<dbReference type="NCBIfam" id="NF001379">
    <property type="entry name" value="PRK00279.1-1"/>
    <property type="match status" value="1"/>
</dbReference>
<dbReference type="NCBIfam" id="NF001380">
    <property type="entry name" value="PRK00279.1-2"/>
    <property type="match status" value="1"/>
</dbReference>
<dbReference type="NCBIfam" id="NF001381">
    <property type="entry name" value="PRK00279.1-3"/>
    <property type="match status" value="1"/>
</dbReference>
<dbReference type="NCBIfam" id="NF011100">
    <property type="entry name" value="PRK14527.1"/>
    <property type="match status" value="1"/>
</dbReference>
<dbReference type="PANTHER" id="PTHR23359">
    <property type="entry name" value="NUCLEOTIDE KINASE"/>
    <property type="match status" value="1"/>
</dbReference>
<dbReference type="Pfam" id="PF00406">
    <property type="entry name" value="ADK"/>
    <property type="match status" value="1"/>
</dbReference>
<dbReference type="Pfam" id="PF05191">
    <property type="entry name" value="ADK_lid"/>
    <property type="match status" value="1"/>
</dbReference>
<dbReference type="PRINTS" id="PR00094">
    <property type="entry name" value="ADENYLTKNASE"/>
</dbReference>
<dbReference type="SUPFAM" id="SSF52540">
    <property type="entry name" value="P-loop containing nucleoside triphosphate hydrolases"/>
    <property type="match status" value="1"/>
</dbReference>
<dbReference type="PROSITE" id="PS00113">
    <property type="entry name" value="ADENYLATE_KINASE"/>
    <property type="match status" value="1"/>
</dbReference>
<evidence type="ECO:0000255" key="1">
    <source>
        <dbReference type="HAMAP-Rule" id="MF_00235"/>
    </source>
</evidence>
<evidence type="ECO:0000256" key="2">
    <source>
        <dbReference type="SAM" id="MobiDB-lite"/>
    </source>
</evidence>
<reference key="1">
    <citation type="submission" date="2008-05" db="EMBL/GenBank/DDBJ databases">
        <title>Complete sequence of chromosome 1 of Ralstonia pickettii 12J.</title>
        <authorList>
            <person name="Lucas S."/>
            <person name="Copeland A."/>
            <person name="Lapidus A."/>
            <person name="Glavina del Rio T."/>
            <person name="Dalin E."/>
            <person name="Tice H."/>
            <person name="Bruce D."/>
            <person name="Goodwin L."/>
            <person name="Pitluck S."/>
            <person name="Meincke L."/>
            <person name="Brettin T."/>
            <person name="Detter J.C."/>
            <person name="Han C."/>
            <person name="Kuske C.R."/>
            <person name="Schmutz J."/>
            <person name="Larimer F."/>
            <person name="Land M."/>
            <person name="Hauser L."/>
            <person name="Kyrpides N."/>
            <person name="Mikhailova N."/>
            <person name="Marsh T."/>
            <person name="Richardson P."/>
        </authorList>
    </citation>
    <scope>NUCLEOTIDE SEQUENCE [LARGE SCALE GENOMIC DNA]</scope>
    <source>
        <strain>12J</strain>
    </source>
</reference>
<name>KAD_RALPJ</name>
<sequence>MRLILLGAPGAGKGTQAKFICEKFGIPQISTGDMLRAAVKAGTPLGIEAKKVMDAGGLVSDDIIIGLVKDRLQQPDCKNGYLFDGFPRTIPQAEAMKDAAVAIDYVLEIDVPFDAIIERMSGRRVHVASGRTYHVKYNPPKTEGVDDESGEPLIQRDDDKEDTVRKRLDVYENQTRPLVDYYSQWAANGNSAAKVAPPKYRKISGVGNVDEITARVFGALQD</sequence>